<feature type="chain" id="PRO_0000087199" description="Fetal and adult testis-expressed transcript protein homolog">
    <location>
        <begin position="1"/>
        <end position="180"/>
    </location>
</feature>
<feature type="transmembrane region" description="Helical" evidence="3">
    <location>
        <begin position="160"/>
        <end position="178"/>
    </location>
</feature>
<feature type="region of interest" description="Disordered" evidence="4">
    <location>
        <begin position="77"/>
        <end position="108"/>
    </location>
</feature>
<feature type="compositionally biased region" description="Gly residues" evidence="4">
    <location>
        <begin position="84"/>
        <end position="93"/>
    </location>
</feature>
<feature type="compositionally biased region" description="Polar residues" evidence="4">
    <location>
        <begin position="96"/>
        <end position="107"/>
    </location>
</feature>
<dbReference type="EMBL" id="AF387304">
    <property type="protein sequence ID" value="AAL30169.1"/>
    <property type="molecule type" value="mRNA"/>
</dbReference>
<dbReference type="EMBL" id="BC109644">
    <property type="protein sequence ID" value="AAI09645.1"/>
    <property type="molecule type" value="mRNA"/>
</dbReference>
<dbReference type="RefSeq" id="NP_776477.1">
    <property type="nucleotide sequence ID" value="NM_174052.2"/>
</dbReference>
<dbReference type="SMR" id="Q95LA0"/>
<dbReference type="FunCoup" id="Q95LA0">
    <property type="interactions" value="39"/>
</dbReference>
<dbReference type="STRING" id="9913.ENSBTAP00000008963"/>
<dbReference type="PaxDb" id="9913-ENSBTAP00000008963"/>
<dbReference type="GeneID" id="281153"/>
<dbReference type="KEGG" id="bta:281153"/>
<dbReference type="CTD" id="89885"/>
<dbReference type="VEuPathDB" id="HostDB:ENSBTAG00000006820"/>
<dbReference type="eggNOG" id="ENOG502SRT6">
    <property type="taxonomic scope" value="Eukaryota"/>
</dbReference>
<dbReference type="HOGENOM" id="CLU_129363_0_0_1"/>
<dbReference type="InParanoid" id="Q95LA0"/>
<dbReference type="OMA" id="MEHGSQS"/>
<dbReference type="OrthoDB" id="5986838at2759"/>
<dbReference type="TreeFam" id="TF338514"/>
<dbReference type="Proteomes" id="UP000009136">
    <property type="component" value="Chromosome X"/>
</dbReference>
<dbReference type="Bgee" id="ENSBTAG00000006820">
    <property type="expression patterns" value="Expressed in spermatocyte and 21 other cell types or tissues"/>
</dbReference>
<dbReference type="GO" id="GO:0005783">
    <property type="term" value="C:endoplasmic reticulum"/>
    <property type="evidence" value="ECO:0000318"/>
    <property type="project" value="GO_Central"/>
</dbReference>
<dbReference type="GO" id="GO:0005789">
    <property type="term" value="C:endoplasmic reticulum membrane"/>
    <property type="evidence" value="ECO:0007669"/>
    <property type="project" value="UniProtKB-SubCell"/>
</dbReference>
<dbReference type="GO" id="GO:0044233">
    <property type="term" value="C:mitochondria-associated endoplasmic reticulum membrane contact site"/>
    <property type="evidence" value="ECO:0000318"/>
    <property type="project" value="GO_Central"/>
</dbReference>
<dbReference type="GO" id="GO:0005741">
    <property type="term" value="C:mitochondrial outer membrane"/>
    <property type="evidence" value="ECO:0000318"/>
    <property type="project" value="GO_Central"/>
</dbReference>
<dbReference type="GO" id="GO:0031625">
    <property type="term" value="F:ubiquitin protein ligase binding"/>
    <property type="evidence" value="ECO:0000318"/>
    <property type="project" value="GO_Central"/>
</dbReference>
<dbReference type="GO" id="GO:0006915">
    <property type="term" value="P:apoptotic process"/>
    <property type="evidence" value="ECO:0007669"/>
    <property type="project" value="UniProtKB-KW"/>
</dbReference>
<dbReference type="GO" id="GO:0043066">
    <property type="term" value="P:negative regulation of apoptotic process"/>
    <property type="evidence" value="ECO:0000318"/>
    <property type="project" value="GO_Central"/>
</dbReference>
<dbReference type="GO" id="GO:0051562">
    <property type="term" value="P:negative regulation of mitochondrial calcium ion concentration"/>
    <property type="evidence" value="ECO:0000318"/>
    <property type="project" value="GO_Central"/>
</dbReference>
<dbReference type="InterPro" id="IPR039153">
    <property type="entry name" value="FATE1"/>
</dbReference>
<dbReference type="InterPro" id="IPR039433">
    <property type="entry name" value="Mff-like_dom"/>
</dbReference>
<dbReference type="PANTHER" id="PTHR21128">
    <property type="entry name" value="FETAL AND ADULT TESTIS-EXPRESSED TRANSCRIPT PROTEIN"/>
    <property type="match status" value="1"/>
</dbReference>
<dbReference type="PANTHER" id="PTHR21128:SF0">
    <property type="entry name" value="FETAL AND ADULT TESTIS-EXPRESSED TRANSCRIPT PROTEIN"/>
    <property type="match status" value="1"/>
</dbReference>
<dbReference type="Pfam" id="PF05644">
    <property type="entry name" value="Miff"/>
    <property type="match status" value="1"/>
</dbReference>
<sequence>MAGGAVPNLKEKMQVPKDEDLLLGSFRDNQECSVAAEMKEHMSRLLGASQRRQRVDPKAVGSAVVWNTAANQSKKMGPQLRGVGVVGEQGDGGAQPQENPGGSQGMRSQFERRELNTLAEIGLEELNELEMEIMRRQLFMITERLRYLEDQSATWHQREVLLFTMLLSSCITNLWLWMRQ</sequence>
<evidence type="ECO:0000250" key="1">
    <source>
        <dbReference type="UniProtKB" id="Q8CEK7"/>
    </source>
</evidence>
<evidence type="ECO:0000250" key="2">
    <source>
        <dbReference type="UniProtKB" id="Q969F0"/>
    </source>
</evidence>
<evidence type="ECO:0000255" key="3"/>
<evidence type="ECO:0000256" key="4">
    <source>
        <dbReference type="SAM" id="MobiDB-lite"/>
    </source>
</evidence>
<keyword id="KW-0053">Apoptosis</keyword>
<keyword id="KW-0256">Endoplasmic reticulum</keyword>
<keyword id="KW-0472">Membrane</keyword>
<keyword id="KW-0496">Mitochondrion</keyword>
<keyword id="KW-1000">Mitochondrion outer membrane</keyword>
<keyword id="KW-1185">Reference proteome</keyword>
<keyword id="KW-0812">Transmembrane</keyword>
<keyword id="KW-1133">Transmembrane helix</keyword>
<protein>
    <recommendedName>
        <fullName>Fetal and adult testis-expressed transcript protein homolog</fullName>
    </recommendedName>
</protein>
<gene>
    <name type="primary">FATE1</name>
    <name type="synonym">FATE</name>
</gene>
<proteinExistence type="evidence at transcript level"/>
<reference key="1">
    <citation type="submission" date="2001-05" db="EMBL/GenBank/DDBJ databases">
        <authorList>
            <person name="Olesen C."/>
            <person name="Harboe T.L."/>
        </authorList>
    </citation>
    <scope>NUCLEOTIDE SEQUENCE [MRNA]</scope>
</reference>
<reference key="2">
    <citation type="submission" date="2005-11" db="EMBL/GenBank/DDBJ databases">
        <authorList>
            <consortium name="NIH - Mammalian Gene Collection (MGC) project"/>
        </authorList>
    </citation>
    <scope>NUCLEOTIDE SEQUENCE [LARGE SCALE MRNA]</scope>
    <source>
        <strain>Crossbred X Angus</strain>
        <tissue>Liver</tissue>
    </source>
</reference>
<organism>
    <name type="scientific">Bos taurus</name>
    <name type="common">Bovine</name>
    <dbReference type="NCBI Taxonomy" id="9913"/>
    <lineage>
        <taxon>Eukaryota</taxon>
        <taxon>Metazoa</taxon>
        <taxon>Chordata</taxon>
        <taxon>Craniata</taxon>
        <taxon>Vertebrata</taxon>
        <taxon>Euteleostomi</taxon>
        <taxon>Mammalia</taxon>
        <taxon>Eutheria</taxon>
        <taxon>Laurasiatheria</taxon>
        <taxon>Artiodactyla</taxon>
        <taxon>Ruminantia</taxon>
        <taxon>Pecora</taxon>
        <taxon>Bovidae</taxon>
        <taxon>Bovinae</taxon>
        <taxon>Bos</taxon>
    </lineage>
</organism>
<accession>Q95LA0</accession>
<accession>Q32LC8</accession>
<name>FATE1_BOVIN</name>
<comment type="function">
    <text evidence="2">Involved in the regulation of endoplasmic reticulum (ER)-mitochondria coupling. Negatively regulates the ER-mitochondria distance and Ca(2+) transfer from ER to mitochondria possibly implicating it in the regulation of apoptosis. May collaborate with RNF183 to restrain BIK protein levels thus regulating apoptotic signaling.</text>
</comment>
<comment type="subunit">
    <text evidence="2">Interacts with BIK and RNF183. Interacts with IMMT/MIC60and EMD.</text>
</comment>
<comment type="subcellular location">
    <subcellularLocation>
        <location evidence="2">Mitochondrion</location>
    </subcellularLocation>
    <subcellularLocation>
        <location evidence="2">Mitochondrion outer membrane</location>
    </subcellularLocation>
    <subcellularLocation>
        <location evidence="2">Endoplasmic reticulum membrane</location>
        <topology evidence="1">Single-pass membrane protein</topology>
        <orientation evidence="2">Cytoplasmic side</orientation>
    </subcellularLocation>
    <text evidence="2">Localized to specific membrane structures termed mitochondria-associated membranes (MAMs) which connect the endoplasmic reticulum (ER) and the mitochondria. Also associated with the outer surface of mitochondria at sites that are not in close contact with the ER.</text>
</comment>